<proteinExistence type="evidence at protein level"/>
<dbReference type="EC" id="1.11.1.14" evidence="4"/>
<dbReference type="EMBL" id="X54257">
    <property type="protein sequence ID" value="CAA38177.1"/>
    <property type="molecule type" value="Genomic_DNA"/>
</dbReference>
<dbReference type="EMBL" id="M37701">
    <property type="protein sequence ID" value="AAA33741.1"/>
    <property type="molecule type" value="Genomic_DNA"/>
</dbReference>
<dbReference type="PIR" id="JH0156">
    <property type="entry name" value="JH0156"/>
</dbReference>
<dbReference type="PIR" id="PS0011">
    <property type="entry name" value="PS0011"/>
</dbReference>
<dbReference type="PIR" id="S13563">
    <property type="entry name" value="OPJGAP"/>
</dbReference>
<dbReference type="SMR" id="P31837"/>
<dbReference type="CAZy" id="AA2">
    <property type="family name" value="Auxiliary Activities 2"/>
</dbReference>
<dbReference type="PeroxiBase" id="2413">
    <property type="entry name" value="PcLiP02_RP78"/>
</dbReference>
<dbReference type="GlyCosmos" id="P31837">
    <property type="glycosylation" value="1 site, No reported glycans"/>
</dbReference>
<dbReference type="VEuPathDB" id="FungiDB:AGR57_14164"/>
<dbReference type="BioCyc" id="MetaCyc:MONOMER-14336"/>
<dbReference type="UniPathway" id="UPA00892"/>
<dbReference type="GO" id="GO:0016690">
    <property type="term" value="F:diarylpropane peroxidase activity"/>
    <property type="evidence" value="ECO:0007669"/>
    <property type="project" value="UniProtKB-EC"/>
</dbReference>
<dbReference type="GO" id="GO:0020037">
    <property type="term" value="F:heme binding"/>
    <property type="evidence" value="ECO:0007669"/>
    <property type="project" value="InterPro"/>
</dbReference>
<dbReference type="GO" id="GO:0046872">
    <property type="term" value="F:metal ion binding"/>
    <property type="evidence" value="ECO:0007669"/>
    <property type="project" value="UniProtKB-KW"/>
</dbReference>
<dbReference type="GO" id="GO:0034599">
    <property type="term" value="P:cellular response to oxidative stress"/>
    <property type="evidence" value="ECO:0007669"/>
    <property type="project" value="InterPro"/>
</dbReference>
<dbReference type="GO" id="GO:0042744">
    <property type="term" value="P:hydrogen peroxide catabolic process"/>
    <property type="evidence" value="ECO:0007669"/>
    <property type="project" value="UniProtKB-KW"/>
</dbReference>
<dbReference type="GO" id="GO:0046274">
    <property type="term" value="P:lignin catabolic process"/>
    <property type="evidence" value="ECO:0007669"/>
    <property type="project" value="UniProtKB-UniPathway"/>
</dbReference>
<dbReference type="GO" id="GO:0000302">
    <property type="term" value="P:response to reactive oxygen species"/>
    <property type="evidence" value="ECO:0007669"/>
    <property type="project" value="TreeGrafter"/>
</dbReference>
<dbReference type="CDD" id="cd00692">
    <property type="entry name" value="ligninase"/>
    <property type="match status" value="1"/>
</dbReference>
<dbReference type="Gene3D" id="1.10.520.10">
    <property type="match status" value="1"/>
</dbReference>
<dbReference type="Gene3D" id="1.10.420.10">
    <property type="entry name" value="Peroxidase, domain 2"/>
    <property type="match status" value="1"/>
</dbReference>
<dbReference type="InterPro" id="IPR044831">
    <property type="entry name" value="Ccp1-like"/>
</dbReference>
<dbReference type="InterPro" id="IPR002016">
    <property type="entry name" value="Haem_peroxidase"/>
</dbReference>
<dbReference type="InterPro" id="IPR010255">
    <property type="entry name" value="Haem_peroxidase_sf"/>
</dbReference>
<dbReference type="InterPro" id="IPR001621">
    <property type="entry name" value="Ligninase"/>
</dbReference>
<dbReference type="InterPro" id="IPR024589">
    <property type="entry name" value="Ligninase_C"/>
</dbReference>
<dbReference type="InterPro" id="IPR019794">
    <property type="entry name" value="Peroxidases_AS"/>
</dbReference>
<dbReference type="InterPro" id="IPR019793">
    <property type="entry name" value="Peroxidases_heam-ligand_BS"/>
</dbReference>
<dbReference type="PANTHER" id="PTHR31356:SF66">
    <property type="entry name" value="CATALASE-PEROXIDASE"/>
    <property type="match status" value="1"/>
</dbReference>
<dbReference type="PANTHER" id="PTHR31356">
    <property type="entry name" value="THYLAKOID LUMENAL 29 KDA PROTEIN, CHLOROPLASTIC-RELATED"/>
    <property type="match status" value="1"/>
</dbReference>
<dbReference type="Pfam" id="PF00141">
    <property type="entry name" value="peroxidase"/>
    <property type="match status" value="1"/>
</dbReference>
<dbReference type="Pfam" id="PF11895">
    <property type="entry name" value="Peroxidase_ext"/>
    <property type="match status" value="1"/>
</dbReference>
<dbReference type="PRINTS" id="PR00462">
    <property type="entry name" value="LIGNINASE"/>
</dbReference>
<dbReference type="PRINTS" id="PR00458">
    <property type="entry name" value="PEROXIDASE"/>
</dbReference>
<dbReference type="SUPFAM" id="SSF48113">
    <property type="entry name" value="Heme-dependent peroxidases"/>
    <property type="match status" value="1"/>
</dbReference>
<dbReference type="PROSITE" id="PS00435">
    <property type="entry name" value="PEROXIDASE_1"/>
    <property type="match status" value="1"/>
</dbReference>
<dbReference type="PROSITE" id="PS00436">
    <property type="entry name" value="PEROXIDASE_2"/>
    <property type="match status" value="1"/>
</dbReference>
<dbReference type="PROSITE" id="PS50873">
    <property type="entry name" value="PEROXIDASE_4"/>
    <property type="match status" value="1"/>
</dbReference>
<gene>
    <name type="primary">LIPA</name>
    <name type="synonym">LPOB</name>
</gene>
<organism>
    <name type="scientific">Phanerodontia chrysosporium</name>
    <name type="common">White-rot fungus</name>
    <name type="synonym">Sporotrichum pruinosum</name>
    <dbReference type="NCBI Taxonomy" id="2822231"/>
    <lineage>
        <taxon>Eukaryota</taxon>
        <taxon>Fungi</taxon>
        <taxon>Dikarya</taxon>
        <taxon>Basidiomycota</taxon>
        <taxon>Agaricomycotina</taxon>
        <taxon>Agaricomycetes</taxon>
        <taxon>Polyporales</taxon>
        <taxon>Phanerochaetaceae</taxon>
        <taxon>Phanerodontia</taxon>
    </lineage>
</organism>
<reference key="1">
    <citation type="journal article" date="1991" name="Nucleic Acids Res.">
        <title>Genomic organization of lignin peroxidase genes of Phanerochaete chrysosporium.</title>
        <authorList>
            <person name="Gaskell J."/>
            <person name="Dieperink E."/>
            <person name="Cullen D."/>
        </authorList>
    </citation>
    <scope>NUCLEOTIDE SEQUENCE [GENOMIC DNA]</scope>
    <source>
        <strain>ATCC 24725 / DSM 6909 / CBS 481.73 / BCRC 36200 / NRRL 6361 / VKM F-1767</strain>
    </source>
</reference>
<reference key="2">
    <citation type="journal article" date="1990" name="Gene">
        <title>Characterization of lignin peroxidase-encoding genes from lignin-degrading basidiomycetes.</title>
        <authorList>
            <person name="Huoponen K."/>
            <person name="Ollikka P."/>
            <person name="Kaelin M."/>
            <person name="Walther I."/>
            <person name="Maentsaelae P."/>
            <person name="Reiser J."/>
        </authorList>
    </citation>
    <scope>NUCLEOTIDE SEQUENCE [GENOMIC DNA]</scope>
    <source>
        <strain>ATCC 24725 / DSM 6909 / CBS 481.73 / BCRC 36200 / NRRL 6361 / VKM F-1767</strain>
    </source>
</reference>
<reference key="3">
    <citation type="journal article" date="1988" name="Gene">
        <title>Molecular analysis of a Phanerochaete chrysosporium lignin peroxidase gene.</title>
        <authorList>
            <person name="Walther L."/>
            <person name="Kaelin M."/>
            <person name="Reiser J."/>
            <person name="Suter F."/>
            <person name="Fritsche B."/>
            <person name="Saloheimo M."/>
            <person name="Leisola M."/>
            <person name="Teeri T."/>
            <person name="Knowles J.K.C."/>
            <person name="Fiechter A."/>
        </authorList>
    </citation>
    <scope>PROTEIN SEQUENCE OF 29-58</scope>
    <scope>FUNCTION</scope>
    <scope>CATALYTIC ACTIVITY</scope>
    <scope>BIOPHYSICOCHEMICAL PROPERTIES</scope>
</reference>
<sequence>MAFKQLVAAISLALSLTTANAAVVKEKRATCSNGATVGDASCCAWFDVLDDIQQNLFQGGQCGAEAHESIRLVFHDAIAISPAMEAQGKFGGGGADGSIMIFDDIEPNFHPNIGLDEIINLQKPFVQKHGVTPGAFIAFAGAVALSNCPGAPQMNFFTGRAPATQPAPDGLVPEPFHTVDQIIARVNDAGEFDELELVWMLSAHSVAAVNDVDPTVQGLPFDSTPGIFDSQFFVETQFRGILFPGSGGNQGEVESGMAGEIRIQTDHTLARDSRTACEWQSFVNNQSKLVSDFQFIFLALTQLGQDPNAMTDCSDVIPISKPIPGNLPFSFFPPGKSMKDVEQACAETPFPSLVTLPGPATSVARIPPPPGA</sequence>
<comment type="function">
    <text evidence="4">Depolymerization of lignin. Catalyzes the C(alpha)-C(beta) cleavage of the propyl side chains of lignin.</text>
</comment>
<comment type="catalytic activity">
    <reaction evidence="4">
        <text>1-(3,4-dimethoxyphenyl)-2-(2-methoxyphenoxy)propane-1,3-diol + H2O2 = 3,4-dimethoxybenzaldehyde + guaiacol + glycolaldehyde + H2O</text>
        <dbReference type="Rhea" id="RHEA:48004"/>
        <dbReference type="ChEBI" id="CHEBI:15377"/>
        <dbReference type="ChEBI" id="CHEBI:16240"/>
        <dbReference type="ChEBI" id="CHEBI:17071"/>
        <dbReference type="ChEBI" id="CHEBI:17098"/>
        <dbReference type="ChEBI" id="CHEBI:28591"/>
        <dbReference type="ChEBI" id="CHEBI:86963"/>
        <dbReference type="EC" id="1.11.1.14"/>
    </reaction>
</comment>
<comment type="catalytic activity">
    <reaction evidence="4">
        <text>2 (3,4-dimethoxyphenyl)methanol + H2O2 = 2 (3,4-dimethoxyphenyl)methanol radical + 2 H2O</text>
        <dbReference type="Rhea" id="RHEA:30271"/>
        <dbReference type="ChEBI" id="CHEBI:15377"/>
        <dbReference type="ChEBI" id="CHEBI:16240"/>
        <dbReference type="ChEBI" id="CHEBI:62150"/>
        <dbReference type="ChEBI" id="CHEBI:88143"/>
        <dbReference type="EC" id="1.11.1.14"/>
    </reaction>
</comment>
<comment type="cofactor">
    <cofactor evidence="2">
        <name>heme b</name>
        <dbReference type="ChEBI" id="CHEBI:60344"/>
    </cofactor>
    <text evidence="2">Binds 1 heme b (iron(II)-protoporphyrin IX) group per subunit.</text>
</comment>
<comment type="cofactor">
    <cofactor evidence="2">
        <name>Ca(2+)</name>
        <dbReference type="ChEBI" id="CHEBI:29108"/>
    </cofactor>
    <text evidence="2">Binds 2 calcium ions per subunit.</text>
</comment>
<comment type="biophysicochemical properties">
    <kinetics>
        <KM evidence="4">140 uM for H(2)O(2)</KM>
        <KM evidence="4">200 uM for (3,4-dimethoxyphenyl)methanol</KM>
    </kinetics>
    <phDependence>
        <text evidence="4">Optimum pH is 2.5.</text>
    </phDependence>
</comment>
<comment type="pathway">
    <text>Secondary metabolite metabolism; lignin degradation.</text>
</comment>
<comment type="similarity">
    <text evidence="5">Belongs to the peroxidase family. Ligninase subfamily.</text>
</comment>
<evidence type="ECO:0000255" key="1"/>
<evidence type="ECO:0000255" key="2">
    <source>
        <dbReference type="PROSITE-ProRule" id="PRU00297"/>
    </source>
</evidence>
<evidence type="ECO:0000255" key="3">
    <source>
        <dbReference type="PROSITE-ProRule" id="PRU10012"/>
    </source>
</evidence>
<evidence type="ECO:0000269" key="4">
    <source>
    </source>
</evidence>
<evidence type="ECO:0000305" key="5"/>
<keyword id="KW-0106">Calcium</keyword>
<keyword id="KW-0165">Cleavage on pair of basic residues</keyword>
<keyword id="KW-0903">Direct protein sequencing</keyword>
<keyword id="KW-1015">Disulfide bond</keyword>
<keyword id="KW-0325">Glycoprotein</keyword>
<keyword id="KW-0349">Heme</keyword>
<keyword id="KW-0376">Hydrogen peroxide</keyword>
<keyword id="KW-0408">Iron</keyword>
<keyword id="KW-0439">Lignin degradation</keyword>
<keyword id="KW-0479">Metal-binding</keyword>
<keyword id="KW-0560">Oxidoreductase</keyword>
<keyword id="KW-0575">Peroxidase</keyword>
<keyword id="KW-0732">Signal</keyword>
<keyword id="KW-0865">Zymogen</keyword>
<name>LIGA_PHACH</name>
<protein>
    <recommendedName>
        <fullName>Ligninase A</fullName>
        <ecNumber evidence="4">1.11.1.14</ecNumber>
    </recommendedName>
    <alternativeName>
        <fullName>Diarylpropane peroxidase</fullName>
    </alternativeName>
    <alternativeName>
        <fullName>Lignin peroxidase</fullName>
    </alternativeName>
</protein>
<feature type="signal peptide" evidence="1">
    <location>
        <begin position="1"/>
        <end position="21"/>
    </location>
</feature>
<feature type="propeptide" id="PRO_0000023772" evidence="4">
    <location>
        <begin position="22"/>
        <end position="28"/>
    </location>
</feature>
<feature type="chain" id="PRO_0000023773" description="Ligninase A">
    <location>
        <begin position="29"/>
        <end position="372"/>
    </location>
</feature>
<feature type="active site" description="Proton acceptor" evidence="2 3">
    <location>
        <position position="75"/>
    </location>
</feature>
<feature type="binding site" evidence="2">
    <location>
        <position position="76"/>
    </location>
    <ligand>
        <name>Ca(2+)</name>
        <dbReference type="ChEBI" id="CHEBI:29108"/>
        <label>1</label>
    </ligand>
</feature>
<feature type="binding site" evidence="2">
    <location>
        <position position="94"/>
    </location>
    <ligand>
        <name>Ca(2+)</name>
        <dbReference type="ChEBI" id="CHEBI:29108"/>
        <label>1</label>
    </ligand>
</feature>
<feature type="binding site" evidence="2">
    <location>
        <position position="96"/>
    </location>
    <ligand>
        <name>Ca(2+)</name>
        <dbReference type="ChEBI" id="CHEBI:29108"/>
        <label>1</label>
    </ligand>
</feature>
<feature type="binding site" evidence="2">
    <location>
        <position position="98"/>
    </location>
    <ligand>
        <name>Ca(2+)</name>
        <dbReference type="ChEBI" id="CHEBI:29108"/>
        <label>1</label>
    </ligand>
</feature>
<feature type="binding site" description="axial binding residue" evidence="2">
    <location>
        <position position="204"/>
    </location>
    <ligand>
        <name>heme b</name>
        <dbReference type="ChEBI" id="CHEBI:60344"/>
    </ligand>
    <ligandPart>
        <name>Fe</name>
        <dbReference type="ChEBI" id="CHEBI:18248"/>
    </ligandPart>
</feature>
<feature type="binding site" evidence="2">
    <location>
        <position position="205"/>
    </location>
    <ligand>
        <name>Ca(2+)</name>
        <dbReference type="ChEBI" id="CHEBI:29108"/>
        <label>2</label>
    </ligand>
</feature>
<feature type="binding site" evidence="2">
    <location>
        <position position="222"/>
    </location>
    <ligand>
        <name>Ca(2+)</name>
        <dbReference type="ChEBI" id="CHEBI:29108"/>
        <label>2</label>
    </ligand>
</feature>
<feature type="binding site" evidence="2">
    <location>
        <position position="224"/>
    </location>
    <ligand>
        <name>Ca(2+)</name>
        <dbReference type="ChEBI" id="CHEBI:29108"/>
        <label>2</label>
    </ligand>
</feature>
<feature type="binding site" evidence="2">
    <location>
        <position position="227"/>
    </location>
    <ligand>
        <name>Ca(2+)</name>
        <dbReference type="ChEBI" id="CHEBI:29108"/>
        <label>2</label>
    </ligand>
</feature>
<feature type="binding site" evidence="2">
    <location>
        <position position="229"/>
    </location>
    <ligand>
        <name>Ca(2+)</name>
        <dbReference type="ChEBI" id="CHEBI:29108"/>
        <label>2</label>
    </ligand>
</feature>
<feature type="site" description="Transition state stabilizer" evidence="2">
    <location>
        <position position="71"/>
    </location>
</feature>
<feature type="glycosylation site" description="N-linked (GlcNAc...) asparagine" evidence="1">
    <location>
        <position position="285"/>
    </location>
</feature>
<feature type="disulfide bond" evidence="2">
    <location>
        <begin position="31"/>
        <end position="43"/>
    </location>
</feature>
<feature type="disulfide bond" evidence="2">
    <location>
        <begin position="42"/>
        <end position="313"/>
    </location>
</feature>
<feature type="disulfide bond" evidence="2">
    <location>
        <begin position="62"/>
        <end position="148"/>
    </location>
</feature>
<feature type="disulfide bond" evidence="2">
    <location>
        <begin position="277"/>
        <end position="345"/>
    </location>
</feature>
<feature type="sequence conflict" description="In Ref. 2; AAA33741." evidence="5" ref="2">
    <original>A</original>
    <variation>D</variation>
    <location>
        <position position="135"/>
    </location>
</feature>
<feature type="sequence conflict" description="In Ref. 2; AAA33741." evidence="5" ref="2">
    <original>A</original>
    <variation>R</variation>
    <location>
        <position position="161"/>
    </location>
</feature>
<feature type="sequence conflict" description="In Ref. 2; AAA33741." evidence="5" ref="2">
    <original>L</original>
    <variation>H</variation>
    <location>
        <position position="298"/>
    </location>
</feature>
<accession>P31837</accession>